<accession>P0A5P3</accession>
<accession>A0A1R3Y2V0</accession>
<accession>O53251</accession>
<accession>X2BM45</accession>
<name>CFP6_MYCBO</name>
<comment type="subcellular location">
    <subcellularLocation>
        <location>Secreted</location>
    </subcellularLocation>
</comment>
<comment type="caution">
    <text evidence="1">The initiator methionine may be further upstream making the sequence a precursor.</text>
</comment>
<gene>
    <name type="primary">cfp6</name>
    <name type="ordered locus">BQ2027_MB3029</name>
</gene>
<keyword id="KW-1185">Reference proteome</keyword>
<keyword id="KW-0964">Secreted</keyword>
<feature type="chain" id="PRO_0000089574" description="Low molecular weight protein antigen 6">
    <location>
        <begin position="1"/>
        <end position="112"/>
    </location>
</feature>
<evidence type="ECO:0000305" key="1"/>
<reference key="1">
    <citation type="journal article" date="2003" name="Proc. Natl. Acad. Sci. U.S.A.">
        <title>The complete genome sequence of Mycobacterium bovis.</title>
        <authorList>
            <person name="Garnier T."/>
            <person name="Eiglmeier K."/>
            <person name="Camus J.-C."/>
            <person name="Medina N."/>
            <person name="Mansoor H."/>
            <person name="Pryor M."/>
            <person name="Duthoy S."/>
            <person name="Grondin S."/>
            <person name="Lacroix C."/>
            <person name="Monsempe C."/>
            <person name="Simon S."/>
            <person name="Harris B."/>
            <person name="Atkin R."/>
            <person name="Doggett J."/>
            <person name="Mayes R."/>
            <person name="Keating L."/>
            <person name="Wheeler P.R."/>
            <person name="Parkhill J."/>
            <person name="Barrell B.G."/>
            <person name="Cole S.T."/>
            <person name="Gordon S.V."/>
            <person name="Hewinson R.G."/>
        </authorList>
    </citation>
    <scope>NUCLEOTIDE SEQUENCE [LARGE SCALE GENOMIC DNA]</scope>
    <source>
        <strain>ATCC BAA-935 / AF2122/97</strain>
    </source>
</reference>
<reference key="2">
    <citation type="journal article" date="2017" name="Genome Announc.">
        <title>Updated reference genome sequence and annotation of Mycobacterium bovis AF2122/97.</title>
        <authorList>
            <person name="Malone K.M."/>
            <person name="Farrell D."/>
            <person name="Stuber T.P."/>
            <person name="Schubert O.T."/>
            <person name="Aebersold R."/>
            <person name="Robbe-Austerman S."/>
            <person name="Gordon S.V."/>
        </authorList>
    </citation>
    <scope>NUCLEOTIDE SEQUENCE [LARGE SCALE GENOMIC DNA]</scope>
    <scope>GENOME REANNOTATION</scope>
    <source>
        <strain>ATCC BAA-935 / AF2122/97</strain>
    </source>
</reference>
<proteinExistence type="predicted"/>
<sequence>MAHFAVGFLTLGLLVPVLTWPVSAPLLVIPVALSASIIRLRTLADERGVTVRTLVGSRAVRWDDIDGLRFHRGSWARATLKDGTELRLPAVTFATLPHLTEASSGRVPNPYR</sequence>
<protein>
    <recommendedName>
        <fullName>Low molecular weight protein antigen 6</fullName>
    </recommendedName>
    <alternativeName>
        <fullName>CFP-6</fullName>
    </alternativeName>
</protein>
<dbReference type="EMBL" id="LT708304">
    <property type="protein sequence ID" value="SIU01653.1"/>
    <property type="molecule type" value="Genomic_DNA"/>
</dbReference>
<dbReference type="RefSeq" id="NP_856674.1">
    <property type="nucleotide sequence ID" value="NC_002945.3"/>
</dbReference>
<dbReference type="KEGG" id="mbo:BQ2027_MB3029"/>
<dbReference type="PATRIC" id="fig|233413.5.peg.3329"/>
<dbReference type="Proteomes" id="UP000001419">
    <property type="component" value="Chromosome"/>
</dbReference>
<dbReference type="GO" id="GO:0005576">
    <property type="term" value="C:extracellular region"/>
    <property type="evidence" value="ECO:0007669"/>
    <property type="project" value="UniProtKB-SubCell"/>
</dbReference>
<dbReference type="InterPro" id="IPR019692">
    <property type="entry name" value="CFP-6_PH"/>
</dbReference>
<dbReference type="Pfam" id="PF10756">
    <property type="entry name" value="bPH_6"/>
    <property type="match status" value="1"/>
</dbReference>
<organism>
    <name type="scientific">Mycobacterium bovis (strain ATCC BAA-935 / AF2122/97)</name>
    <dbReference type="NCBI Taxonomy" id="233413"/>
    <lineage>
        <taxon>Bacteria</taxon>
        <taxon>Bacillati</taxon>
        <taxon>Actinomycetota</taxon>
        <taxon>Actinomycetes</taxon>
        <taxon>Mycobacteriales</taxon>
        <taxon>Mycobacteriaceae</taxon>
        <taxon>Mycobacterium</taxon>
        <taxon>Mycobacterium tuberculosis complex</taxon>
    </lineage>
</organism>